<feature type="chain" id="PRO_1000135261" description="Nucleoside diphosphate kinase">
    <location>
        <begin position="1"/>
        <end position="148"/>
    </location>
</feature>
<feature type="active site" description="Pros-phosphohistidine intermediate" evidence="1">
    <location>
        <position position="115"/>
    </location>
</feature>
<feature type="binding site" evidence="1">
    <location>
        <position position="9"/>
    </location>
    <ligand>
        <name>ATP</name>
        <dbReference type="ChEBI" id="CHEBI:30616"/>
    </ligand>
</feature>
<feature type="binding site" evidence="1">
    <location>
        <position position="57"/>
    </location>
    <ligand>
        <name>ATP</name>
        <dbReference type="ChEBI" id="CHEBI:30616"/>
    </ligand>
</feature>
<feature type="binding site" evidence="1">
    <location>
        <position position="85"/>
    </location>
    <ligand>
        <name>ATP</name>
        <dbReference type="ChEBI" id="CHEBI:30616"/>
    </ligand>
</feature>
<feature type="binding site" evidence="1">
    <location>
        <position position="91"/>
    </location>
    <ligand>
        <name>ATP</name>
        <dbReference type="ChEBI" id="CHEBI:30616"/>
    </ligand>
</feature>
<feature type="binding site" evidence="1">
    <location>
        <position position="102"/>
    </location>
    <ligand>
        <name>ATP</name>
        <dbReference type="ChEBI" id="CHEBI:30616"/>
    </ligand>
</feature>
<feature type="binding site" evidence="1">
    <location>
        <position position="112"/>
    </location>
    <ligand>
        <name>ATP</name>
        <dbReference type="ChEBI" id="CHEBI:30616"/>
    </ligand>
</feature>
<sequence length="148" mass="16105">MEKTFLMIKPDGVGRGLIGEIVKRIENKGIKVVGAKLMTVSEDLAKTHYGEHSEKPFFGELVEFITSGPVFAMVLEGDNVVEIGRTLVGKTNPAESAPGTIRGDFGMTVGKNIIHGSDSVASADKEIALWFKEEEILSYDLVTSAWVY</sequence>
<name>NDK_MACCJ</name>
<protein>
    <recommendedName>
        <fullName evidence="1">Nucleoside diphosphate kinase</fullName>
        <shortName evidence="1">NDK</shortName>
        <shortName evidence="1">NDP kinase</shortName>
        <ecNumber evidence="1">2.7.4.6</ecNumber>
    </recommendedName>
    <alternativeName>
        <fullName evidence="1">Nucleoside-2-P kinase</fullName>
    </alternativeName>
</protein>
<keyword id="KW-0067">ATP-binding</keyword>
<keyword id="KW-0963">Cytoplasm</keyword>
<keyword id="KW-0418">Kinase</keyword>
<keyword id="KW-0460">Magnesium</keyword>
<keyword id="KW-0479">Metal-binding</keyword>
<keyword id="KW-0546">Nucleotide metabolism</keyword>
<keyword id="KW-0547">Nucleotide-binding</keyword>
<keyword id="KW-0597">Phosphoprotein</keyword>
<keyword id="KW-1185">Reference proteome</keyword>
<keyword id="KW-0808">Transferase</keyword>
<evidence type="ECO:0000255" key="1">
    <source>
        <dbReference type="HAMAP-Rule" id="MF_00451"/>
    </source>
</evidence>
<organism>
    <name type="scientific">Macrococcus caseolyticus (strain JCSC5402)</name>
    <name type="common">Macrococcoides caseolyticum</name>
    <dbReference type="NCBI Taxonomy" id="458233"/>
    <lineage>
        <taxon>Bacteria</taxon>
        <taxon>Bacillati</taxon>
        <taxon>Bacillota</taxon>
        <taxon>Bacilli</taxon>
        <taxon>Bacillales</taxon>
        <taxon>Staphylococcaceae</taxon>
        <taxon>Macrococcoides</taxon>
    </lineage>
</organism>
<accession>B9E6K9</accession>
<proteinExistence type="inferred from homology"/>
<dbReference type="EC" id="2.7.4.6" evidence="1"/>
<dbReference type="EMBL" id="AP009484">
    <property type="protein sequence ID" value="BAH17827.1"/>
    <property type="molecule type" value="Genomic_DNA"/>
</dbReference>
<dbReference type="RefSeq" id="WP_012657025.1">
    <property type="nucleotide sequence ID" value="NC_011999.1"/>
</dbReference>
<dbReference type="SMR" id="B9E6K9"/>
<dbReference type="STRING" id="458233.MCCL_1120"/>
<dbReference type="KEGG" id="mcl:MCCL_1120"/>
<dbReference type="eggNOG" id="COG0105">
    <property type="taxonomic scope" value="Bacteria"/>
</dbReference>
<dbReference type="HOGENOM" id="CLU_060216_6_3_9"/>
<dbReference type="OrthoDB" id="9801161at2"/>
<dbReference type="Proteomes" id="UP000001383">
    <property type="component" value="Chromosome"/>
</dbReference>
<dbReference type="GO" id="GO:0005737">
    <property type="term" value="C:cytoplasm"/>
    <property type="evidence" value="ECO:0007669"/>
    <property type="project" value="UniProtKB-SubCell"/>
</dbReference>
<dbReference type="GO" id="GO:0005524">
    <property type="term" value="F:ATP binding"/>
    <property type="evidence" value="ECO:0007669"/>
    <property type="project" value="UniProtKB-UniRule"/>
</dbReference>
<dbReference type="GO" id="GO:0046872">
    <property type="term" value="F:metal ion binding"/>
    <property type="evidence" value="ECO:0007669"/>
    <property type="project" value="UniProtKB-KW"/>
</dbReference>
<dbReference type="GO" id="GO:0004550">
    <property type="term" value="F:nucleoside diphosphate kinase activity"/>
    <property type="evidence" value="ECO:0007669"/>
    <property type="project" value="UniProtKB-UniRule"/>
</dbReference>
<dbReference type="GO" id="GO:0006241">
    <property type="term" value="P:CTP biosynthetic process"/>
    <property type="evidence" value="ECO:0007669"/>
    <property type="project" value="UniProtKB-UniRule"/>
</dbReference>
<dbReference type="GO" id="GO:0006183">
    <property type="term" value="P:GTP biosynthetic process"/>
    <property type="evidence" value="ECO:0007669"/>
    <property type="project" value="UniProtKB-UniRule"/>
</dbReference>
<dbReference type="GO" id="GO:0006228">
    <property type="term" value="P:UTP biosynthetic process"/>
    <property type="evidence" value="ECO:0007669"/>
    <property type="project" value="UniProtKB-UniRule"/>
</dbReference>
<dbReference type="CDD" id="cd04413">
    <property type="entry name" value="NDPk_I"/>
    <property type="match status" value="1"/>
</dbReference>
<dbReference type="FunFam" id="3.30.70.141:FF:000002">
    <property type="entry name" value="Nucleoside diphosphate kinase"/>
    <property type="match status" value="1"/>
</dbReference>
<dbReference type="Gene3D" id="3.30.70.141">
    <property type="entry name" value="Nucleoside diphosphate kinase-like domain"/>
    <property type="match status" value="1"/>
</dbReference>
<dbReference type="HAMAP" id="MF_00451">
    <property type="entry name" value="NDP_kinase"/>
    <property type="match status" value="1"/>
</dbReference>
<dbReference type="InterPro" id="IPR034907">
    <property type="entry name" value="NDK-like_dom"/>
</dbReference>
<dbReference type="InterPro" id="IPR036850">
    <property type="entry name" value="NDK-like_dom_sf"/>
</dbReference>
<dbReference type="InterPro" id="IPR001564">
    <property type="entry name" value="Nucleoside_diP_kinase"/>
</dbReference>
<dbReference type="InterPro" id="IPR023005">
    <property type="entry name" value="Nucleoside_diP_kinase_AS"/>
</dbReference>
<dbReference type="NCBIfam" id="NF001908">
    <property type="entry name" value="PRK00668.1"/>
    <property type="match status" value="1"/>
</dbReference>
<dbReference type="PANTHER" id="PTHR11349">
    <property type="entry name" value="NUCLEOSIDE DIPHOSPHATE KINASE"/>
    <property type="match status" value="1"/>
</dbReference>
<dbReference type="Pfam" id="PF00334">
    <property type="entry name" value="NDK"/>
    <property type="match status" value="1"/>
</dbReference>
<dbReference type="PRINTS" id="PR01243">
    <property type="entry name" value="NUCDPKINASE"/>
</dbReference>
<dbReference type="SMART" id="SM00562">
    <property type="entry name" value="NDK"/>
    <property type="match status" value="1"/>
</dbReference>
<dbReference type="SUPFAM" id="SSF54919">
    <property type="entry name" value="Nucleoside diphosphate kinase, NDK"/>
    <property type="match status" value="1"/>
</dbReference>
<dbReference type="PROSITE" id="PS00469">
    <property type="entry name" value="NDPK"/>
    <property type="match status" value="1"/>
</dbReference>
<dbReference type="PROSITE" id="PS51374">
    <property type="entry name" value="NDPK_LIKE"/>
    <property type="match status" value="1"/>
</dbReference>
<gene>
    <name evidence="1" type="primary">ndk</name>
    <name type="ordered locus">MCCL_1120</name>
</gene>
<reference key="1">
    <citation type="journal article" date="2009" name="J. Bacteriol.">
        <title>Complete genome sequence of Macrococcus caseolyticus strain JCSCS5402, reflecting the ancestral genome of the human-pathogenic staphylococci.</title>
        <authorList>
            <person name="Baba T."/>
            <person name="Kuwahara-Arai K."/>
            <person name="Uchiyama I."/>
            <person name="Takeuchi F."/>
            <person name="Ito T."/>
            <person name="Hiramatsu K."/>
        </authorList>
    </citation>
    <scope>NUCLEOTIDE SEQUENCE [LARGE SCALE GENOMIC DNA]</scope>
    <source>
        <strain>JCSC5402</strain>
    </source>
</reference>
<comment type="function">
    <text evidence="1">Major role in the synthesis of nucleoside triphosphates other than ATP. The ATP gamma phosphate is transferred to the NDP beta phosphate via a ping-pong mechanism, using a phosphorylated active-site intermediate.</text>
</comment>
<comment type="catalytic activity">
    <reaction evidence="1">
        <text>a 2'-deoxyribonucleoside 5'-diphosphate + ATP = a 2'-deoxyribonucleoside 5'-triphosphate + ADP</text>
        <dbReference type="Rhea" id="RHEA:44640"/>
        <dbReference type="ChEBI" id="CHEBI:30616"/>
        <dbReference type="ChEBI" id="CHEBI:61560"/>
        <dbReference type="ChEBI" id="CHEBI:73316"/>
        <dbReference type="ChEBI" id="CHEBI:456216"/>
        <dbReference type="EC" id="2.7.4.6"/>
    </reaction>
</comment>
<comment type="catalytic activity">
    <reaction evidence="1">
        <text>a ribonucleoside 5'-diphosphate + ATP = a ribonucleoside 5'-triphosphate + ADP</text>
        <dbReference type="Rhea" id="RHEA:18113"/>
        <dbReference type="ChEBI" id="CHEBI:30616"/>
        <dbReference type="ChEBI" id="CHEBI:57930"/>
        <dbReference type="ChEBI" id="CHEBI:61557"/>
        <dbReference type="ChEBI" id="CHEBI:456216"/>
        <dbReference type="EC" id="2.7.4.6"/>
    </reaction>
</comment>
<comment type="cofactor">
    <cofactor evidence="1">
        <name>Mg(2+)</name>
        <dbReference type="ChEBI" id="CHEBI:18420"/>
    </cofactor>
</comment>
<comment type="subunit">
    <text evidence="1">Homotetramer.</text>
</comment>
<comment type="subcellular location">
    <subcellularLocation>
        <location evidence="1">Cytoplasm</location>
    </subcellularLocation>
</comment>
<comment type="similarity">
    <text evidence="1">Belongs to the NDK family.</text>
</comment>